<protein>
    <recommendedName>
        <fullName>DNA translocase FtsK</fullName>
    </recommendedName>
    <alternativeName>
        <fullName>DNA translocase SpoIIIE</fullName>
    </alternativeName>
</protein>
<feature type="chain" id="PRO_0000098292" description="DNA translocase FtsK">
    <location>
        <begin position="1"/>
        <end position="780"/>
    </location>
</feature>
<feature type="transmembrane region" description="Helical" evidence="2">
    <location>
        <begin position="31"/>
        <end position="51"/>
    </location>
</feature>
<feature type="transmembrane region" description="Helical" evidence="2">
    <location>
        <begin position="60"/>
        <end position="80"/>
    </location>
</feature>
<feature type="transmembrane region" description="Helical" evidence="2">
    <location>
        <begin position="93"/>
        <end position="113"/>
    </location>
</feature>
<feature type="transmembrane region" description="Helical" evidence="2">
    <location>
        <begin position="145"/>
        <end position="165"/>
    </location>
</feature>
<feature type="transmembrane region" description="Helical" evidence="2">
    <location>
        <begin position="175"/>
        <end position="195"/>
    </location>
</feature>
<feature type="topological domain" description="Cytoplasmic" evidence="2">
    <location>
        <begin position="196"/>
        <end position="780"/>
    </location>
</feature>
<feature type="domain" description="FtsK" evidence="3">
    <location>
        <begin position="445"/>
        <end position="641"/>
    </location>
</feature>
<feature type="region of interest" description="Disordered" evidence="4">
    <location>
        <begin position="1"/>
        <end position="21"/>
    </location>
</feature>
<feature type="region of interest" description="Disordered" evidence="4">
    <location>
        <begin position="212"/>
        <end position="255"/>
    </location>
</feature>
<feature type="region of interest" description="Disordered" evidence="4">
    <location>
        <begin position="274"/>
        <end position="295"/>
    </location>
</feature>
<feature type="compositionally biased region" description="Basic residues" evidence="4">
    <location>
        <begin position="1"/>
        <end position="18"/>
    </location>
</feature>
<feature type="compositionally biased region" description="Basic and acidic residues" evidence="4">
    <location>
        <begin position="212"/>
        <end position="229"/>
    </location>
</feature>
<feature type="compositionally biased region" description="Basic and acidic residues" evidence="4">
    <location>
        <begin position="275"/>
        <end position="294"/>
    </location>
</feature>
<feature type="binding site" evidence="3">
    <location>
        <begin position="465"/>
        <end position="470"/>
    </location>
    <ligand>
        <name>ATP</name>
        <dbReference type="ChEBI" id="CHEBI:30616"/>
    </ligand>
</feature>
<name>FTSK_SPOUR</name>
<organism>
    <name type="scientific">Sporosarcina ureae</name>
    <dbReference type="NCBI Taxonomy" id="1571"/>
    <lineage>
        <taxon>Bacteria</taxon>
        <taxon>Bacillati</taxon>
        <taxon>Bacillota</taxon>
        <taxon>Bacilli</taxon>
        <taxon>Bacillales</taxon>
        <taxon>Caryophanaceae</taxon>
        <taxon>Sporosarcina</taxon>
    </lineage>
</organism>
<dbReference type="EMBL" id="AF177859">
    <property type="protein sequence ID" value="AAD52663.1"/>
    <property type="molecule type" value="Genomic_DNA"/>
</dbReference>
<dbReference type="SMR" id="Q9RNV1"/>
<dbReference type="eggNOG" id="COG1674">
    <property type="taxonomic scope" value="Bacteria"/>
</dbReference>
<dbReference type="GO" id="GO:0005886">
    <property type="term" value="C:plasma membrane"/>
    <property type="evidence" value="ECO:0007669"/>
    <property type="project" value="UniProtKB-SubCell"/>
</dbReference>
<dbReference type="GO" id="GO:0005524">
    <property type="term" value="F:ATP binding"/>
    <property type="evidence" value="ECO:0007669"/>
    <property type="project" value="UniProtKB-KW"/>
</dbReference>
<dbReference type="GO" id="GO:0016887">
    <property type="term" value="F:ATP hydrolysis activity"/>
    <property type="evidence" value="ECO:0007669"/>
    <property type="project" value="InterPro"/>
</dbReference>
<dbReference type="GO" id="GO:0003677">
    <property type="term" value="F:DNA binding"/>
    <property type="evidence" value="ECO:0007669"/>
    <property type="project" value="UniProtKB-KW"/>
</dbReference>
<dbReference type="GO" id="GO:0051301">
    <property type="term" value="P:cell division"/>
    <property type="evidence" value="ECO:0007669"/>
    <property type="project" value="UniProtKB-KW"/>
</dbReference>
<dbReference type="GO" id="GO:0007059">
    <property type="term" value="P:chromosome segregation"/>
    <property type="evidence" value="ECO:0007669"/>
    <property type="project" value="UniProtKB-KW"/>
</dbReference>
<dbReference type="GO" id="GO:0030435">
    <property type="term" value="P:sporulation resulting in formation of a cellular spore"/>
    <property type="evidence" value="ECO:0007669"/>
    <property type="project" value="UniProtKB-KW"/>
</dbReference>
<dbReference type="CDD" id="cd01127">
    <property type="entry name" value="TrwB_TraG_TraD_VirD4"/>
    <property type="match status" value="1"/>
</dbReference>
<dbReference type="Gene3D" id="3.30.980.40">
    <property type="match status" value="1"/>
</dbReference>
<dbReference type="Gene3D" id="3.40.50.300">
    <property type="entry name" value="P-loop containing nucleotide triphosphate hydrolases"/>
    <property type="match status" value="1"/>
</dbReference>
<dbReference type="Gene3D" id="1.10.10.10">
    <property type="entry name" value="Winged helix-like DNA-binding domain superfamily/Winged helix DNA-binding domain"/>
    <property type="match status" value="1"/>
</dbReference>
<dbReference type="InterPro" id="IPR003593">
    <property type="entry name" value="AAA+_ATPase"/>
</dbReference>
<dbReference type="InterPro" id="IPR050206">
    <property type="entry name" value="FtsK/SpoIIIE/SftA"/>
</dbReference>
<dbReference type="InterPro" id="IPR041027">
    <property type="entry name" value="FtsK_alpha"/>
</dbReference>
<dbReference type="InterPro" id="IPR002543">
    <property type="entry name" value="FtsK_dom"/>
</dbReference>
<dbReference type="InterPro" id="IPR018541">
    <property type="entry name" value="Ftsk_gamma"/>
</dbReference>
<dbReference type="InterPro" id="IPR027417">
    <property type="entry name" value="P-loop_NTPase"/>
</dbReference>
<dbReference type="InterPro" id="IPR036388">
    <property type="entry name" value="WH-like_DNA-bd_sf"/>
</dbReference>
<dbReference type="InterPro" id="IPR036390">
    <property type="entry name" value="WH_DNA-bd_sf"/>
</dbReference>
<dbReference type="PANTHER" id="PTHR22683:SF41">
    <property type="entry name" value="DNA TRANSLOCASE FTSK"/>
    <property type="match status" value="1"/>
</dbReference>
<dbReference type="PANTHER" id="PTHR22683">
    <property type="entry name" value="SPORULATION PROTEIN RELATED"/>
    <property type="match status" value="1"/>
</dbReference>
<dbReference type="Pfam" id="PF17854">
    <property type="entry name" value="FtsK_alpha"/>
    <property type="match status" value="1"/>
</dbReference>
<dbReference type="Pfam" id="PF09397">
    <property type="entry name" value="FtsK_gamma"/>
    <property type="match status" value="1"/>
</dbReference>
<dbReference type="Pfam" id="PF01580">
    <property type="entry name" value="FtsK_SpoIIIE"/>
    <property type="match status" value="1"/>
</dbReference>
<dbReference type="SMART" id="SM00382">
    <property type="entry name" value="AAA"/>
    <property type="match status" value="1"/>
</dbReference>
<dbReference type="SMART" id="SM00843">
    <property type="entry name" value="Ftsk_gamma"/>
    <property type="match status" value="1"/>
</dbReference>
<dbReference type="SUPFAM" id="SSF52540">
    <property type="entry name" value="P-loop containing nucleoside triphosphate hydrolases"/>
    <property type="match status" value="1"/>
</dbReference>
<dbReference type="SUPFAM" id="SSF46785">
    <property type="entry name" value="Winged helix' DNA-binding domain"/>
    <property type="match status" value="1"/>
</dbReference>
<dbReference type="PROSITE" id="PS50901">
    <property type="entry name" value="FTSK"/>
    <property type="match status" value="1"/>
</dbReference>
<gene>
    <name type="primary">ftsK</name>
    <name type="synonym">spoIIIE</name>
</gene>
<keyword id="KW-0067">ATP-binding</keyword>
<keyword id="KW-0131">Cell cycle</keyword>
<keyword id="KW-0132">Cell division</keyword>
<keyword id="KW-1003">Cell membrane</keyword>
<keyword id="KW-0159">Chromosome partition</keyword>
<keyword id="KW-0238">DNA-binding</keyword>
<keyword id="KW-0472">Membrane</keyword>
<keyword id="KW-0547">Nucleotide-binding</keyword>
<keyword id="KW-0749">Sporulation</keyword>
<keyword id="KW-0812">Transmembrane</keyword>
<keyword id="KW-1133">Transmembrane helix</keyword>
<proteinExistence type="inferred from homology"/>
<reference key="1">
    <citation type="journal article" date="2000" name="Mol. Microbiol.">
        <title>The putative DNA translocase SpoIIIE is required for sporulation of the symmetrically dividing coccal species Sporosarcina ureae.</title>
        <authorList>
            <person name="Chary V.K."/>
            <person name="Hilbert D.W."/>
            <person name="Higgins M.L."/>
            <person name="Piggot P.J."/>
        </authorList>
    </citation>
    <scope>NUCLEOTIDE SEQUENCE [GENOMIC DNA]</scope>
    <scope>FUNCTION</scope>
    <source>
        <strain>ATCC 13881 / BS 860</strain>
    </source>
</reference>
<accession>Q9RNV1</accession>
<comment type="function">
    <text evidence="1 5">Essential cell division protein that coordinates cell division and chromosome segregation. The N-terminus is involved in assembly of the cell-division machinery. The C-terminus functions as a DNA motor that moves dsDNA in an ATP-dependent manner towards the dif recombination site, which is located within the replication terminus region. Required for activation of the Xer recombinase, allowing activation of chromosome unlinking by recombination (By similarity). Also involved in chromosome segregation into the prespore compartment during sporulation.</text>
</comment>
<comment type="subunit">
    <text evidence="1">Homohexamer. Forms a ring that surrounds DNA (By similarity).</text>
</comment>
<comment type="subcellular location">
    <subcellularLocation>
        <location evidence="1">Cell membrane</location>
        <topology evidence="1">Multi-pass membrane protein</topology>
    </subcellularLocation>
    <text evidence="1">Located at the septum.</text>
</comment>
<comment type="domain">
    <text evidence="1">Consists of an N-terminal domain, which is sufficient for the localization to the septal ring and is required for cell division, followed by a linker domain, and a C-terminal domain, which forms the translocation motor involved in chromosome segregation. The C-terminal domain can be further subdivided into alpha, beta and gamma subdomains. The alpha and beta subdomains form the DNA pump, and the gamma subdomain is a regulatory subdomain (By similarity).</text>
</comment>
<comment type="similarity">
    <text evidence="6">Belongs to the FtsK/SpoIIIE/SftA family.</text>
</comment>
<evidence type="ECO:0000250" key="1"/>
<evidence type="ECO:0000255" key="2"/>
<evidence type="ECO:0000255" key="3">
    <source>
        <dbReference type="PROSITE-ProRule" id="PRU00289"/>
    </source>
</evidence>
<evidence type="ECO:0000256" key="4">
    <source>
        <dbReference type="SAM" id="MobiDB-lite"/>
    </source>
</evidence>
<evidence type="ECO:0000269" key="5">
    <source>
    </source>
</evidence>
<evidence type="ECO:0000305" key="6"/>
<sequence length="780" mass="85799">MAKKRAKKRAPAKKRQQKKQQSQMQPLWFEILGVVLIGIAIIMIFEFGIIGRGLSAFSRFLLGNWYVALPFLIIVQALIFMIKRQIGGYKHRIVIGCLFILGSMLLFSHVHLFQTLYESKVLMSNSALKETWKVLITNDGIHDQTGTLGGGMLGAVLFAMFYSLVDSSGATVAGVLLLLIGIILLTGKALIPFLVEQTPILMNDIKKKWAAREKKSVKSPEEKRKESARSNRKSKPKPVDTSEMEAVQENPEPASEPIISSFTAKIEQATQPEIVQEKQSKAQEDSTLDPKDPVTDYPVMGGEQENESYVLPSAKLLEPPVASDQSGEYDLIQANAKKLEKTFLSFGVKTRVTQVHLGPAVTKYEILPDTGVKVSRIVSLADDIALALAASGIRIEAPIPGKSAVGIEVPNNAVAMVSLREVLESKENNPPEAKLLVGLGRDVTGQAMMTELNKMPHVLIAGATGSGKSVCVNGIIMSIIMRAKPHEVKMMMIDPKMVELNVFNGIPHLLAPVVTDPRKAAQALQRVVSEMERRYELFSHTGTRNIEGYNNHIEQWNEDHDEKHPRMPYIVVIVDELADLMMVASSDVEDSITRLAQMARAAGIHLIIATQRPSVDVITGIIKANIPSRIAFAVSSAIDSRTILDGAGAEKLLGRGDMLFLPAGASKPTRIQGAFVSDEEVEAVVNFVIEQQKAQYQEEMIPTEVEVVAPHEETDELYDEAVQMVVDMQTASVSMIQRRFRVGYARAARIVDQMEARGVVGPPEGSKPRHVLLTKSKLEM</sequence>